<protein>
    <recommendedName>
        <fullName>Protein Rrf1</fullName>
    </recommendedName>
</protein>
<reference key="1">
    <citation type="journal article" date="1993" name="J. Bacteriol.">
        <title>The hmc operon of Desulfovibrio vulgaris subsp. vulgaris Hildenborough encodes a potential transmembrane redox protein complex.</title>
        <authorList>
            <person name="Rossi M."/>
            <person name="Pollock W.B.R."/>
            <person name="Reij M.W."/>
            <person name="Keon R.G."/>
            <person name="Fu R."/>
            <person name="Voordouw G."/>
        </authorList>
    </citation>
    <scope>NUCLEOTIDE SEQUENCE [GENOMIC DNA]</scope>
</reference>
<reference key="2">
    <citation type="journal article" date="2004" name="Nat. Biotechnol.">
        <title>The genome sequence of the anaerobic, sulfate-reducing bacterium Desulfovibrio vulgaris Hildenborough.</title>
        <authorList>
            <person name="Heidelberg J.F."/>
            <person name="Seshadri R."/>
            <person name="Haveman S.A."/>
            <person name="Hemme C.L."/>
            <person name="Paulsen I.T."/>
            <person name="Kolonay J.F."/>
            <person name="Eisen J.A."/>
            <person name="Ward N.L."/>
            <person name="Methe B.A."/>
            <person name="Brinkac L.M."/>
            <person name="Daugherty S.C."/>
            <person name="DeBoy R.T."/>
            <person name="Dodson R.J."/>
            <person name="Durkin A.S."/>
            <person name="Madupu R."/>
            <person name="Nelson W.C."/>
            <person name="Sullivan S.A."/>
            <person name="Fouts D.E."/>
            <person name="Haft D.H."/>
            <person name="Selengut J."/>
            <person name="Peterson J.D."/>
            <person name="Davidsen T.M."/>
            <person name="Zafar N."/>
            <person name="Zhou L."/>
            <person name="Radune D."/>
            <person name="Dimitrov G."/>
            <person name="Hance M."/>
            <person name="Tran K."/>
            <person name="Khouri H.M."/>
            <person name="Gill J."/>
            <person name="Utterback T.R."/>
            <person name="Feldblyum T.V."/>
            <person name="Wall J.D."/>
            <person name="Voordouw G."/>
            <person name="Fraser C.M."/>
        </authorList>
    </citation>
    <scope>NUCLEOTIDE SEQUENCE [LARGE SCALE GENOMIC DNA]</scope>
    <source>
        <strain>ATCC 29579 / DSM 644 / CCUG 34227 / NCIMB 8303 / VKM B-1760 / Hildenborough</strain>
    </source>
</reference>
<organism>
    <name type="scientific">Nitratidesulfovibrio vulgaris (strain ATCC 29579 / DSM 644 / CCUG 34227 / NCIMB 8303 / VKM B-1760 / Hildenborough)</name>
    <name type="common">Desulfovibrio vulgaris</name>
    <dbReference type="NCBI Taxonomy" id="882"/>
    <lineage>
        <taxon>Bacteria</taxon>
        <taxon>Pseudomonadati</taxon>
        <taxon>Thermodesulfobacteriota</taxon>
        <taxon>Desulfovibrionia</taxon>
        <taxon>Desulfovibrionales</taxon>
        <taxon>Desulfovibrionaceae</taxon>
        <taxon>Nitratidesulfovibrio</taxon>
    </lineage>
</organism>
<sequence length="138" mass="14797">MPARILVVQEDPDIAAYLVSLFRQAGYKADAATEGPDAVEMVQASRPDVVFLDLALPQRWGPRFYSWMVTQPGCGNVPVVLVTDFAGLELMVPNAVGTVDKPFDPVLLLALVDRALATYAKGTPDTPDTTGAPAPDNR</sequence>
<name>RRF1_NITV2</name>
<accession>P33394</accession>
<feature type="chain" id="PRO_0000081221" description="Protein Rrf1">
    <location>
        <begin position="1"/>
        <end position="138"/>
    </location>
</feature>
<feature type="domain" description="Response regulatory" evidence="1">
    <location>
        <begin position="4"/>
        <end position="116"/>
    </location>
</feature>
<feature type="modified residue" description="4-aspartylphosphate" evidence="1">
    <location>
        <position position="13"/>
    </location>
</feature>
<feature type="modified residue" description="4-aspartylphosphate" evidence="1">
    <location>
        <position position="53"/>
    </location>
</feature>
<proteinExistence type="inferred from homology"/>
<comment type="function">
    <text>May be involved in regulation of gene transcription. Belongs to the family of response regulators, and members of this family involved in the regulation of gene transcription are two-domain proteins. This protein contains only the N-terminal phosphorylation domain and not the C-terminal DNA-binding domain but it may bind to Rrf2 protein and the latter may bind to DNA.</text>
</comment>
<keyword id="KW-0597">Phosphoprotein</keyword>
<keyword id="KW-1185">Reference proteome</keyword>
<keyword id="KW-0804">Transcription</keyword>
<keyword id="KW-0805">Transcription regulation</keyword>
<keyword id="KW-0902">Two-component regulatory system</keyword>
<gene>
    <name type="primary">rrf1</name>
    <name type="ordered locus">DVU_0530</name>
</gene>
<evidence type="ECO:0000255" key="1">
    <source>
        <dbReference type="PROSITE-ProRule" id="PRU00169"/>
    </source>
</evidence>
<dbReference type="EMBL" id="L16784">
    <property type="protein sequence ID" value="AAA72000.1"/>
    <property type="molecule type" value="Unassigned_DNA"/>
</dbReference>
<dbReference type="EMBL" id="AE017285">
    <property type="protein sequence ID" value="AAS95012.1"/>
    <property type="molecule type" value="Genomic_DNA"/>
</dbReference>
<dbReference type="PIR" id="G40605">
    <property type="entry name" value="G40605"/>
</dbReference>
<dbReference type="RefSeq" id="WP_010937836.1">
    <property type="nucleotide sequence ID" value="NC_002937.3"/>
</dbReference>
<dbReference type="RefSeq" id="YP_009753.1">
    <property type="nucleotide sequence ID" value="NC_002937.3"/>
</dbReference>
<dbReference type="SMR" id="P33394"/>
<dbReference type="STRING" id="882.DVU_0530"/>
<dbReference type="PaxDb" id="882-DVU_0530"/>
<dbReference type="EnsemblBacteria" id="AAS95012">
    <property type="protein sequence ID" value="AAS95012"/>
    <property type="gene ID" value="DVU_0530"/>
</dbReference>
<dbReference type="KEGG" id="dvu:DVU_0530"/>
<dbReference type="PATRIC" id="fig|882.5.peg.506"/>
<dbReference type="eggNOG" id="COG2204">
    <property type="taxonomic scope" value="Bacteria"/>
</dbReference>
<dbReference type="HOGENOM" id="CLU_000445_69_17_7"/>
<dbReference type="OrthoDB" id="9788090at2"/>
<dbReference type="PhylomeDB" id="P33394"/>
<dbReference type="Proteomes" id="UP000002194">
    <property type="component" value="Chromosome"/>
</dbReference>
<dbReference type="GO" id="GO:0000160">
    <property type="term" value="P:phosphorelay signal transduction system"/>
    <property type="evidence" value="ECO:0007669"/>
    <property type="project" value="UniProtKB-KW"/>
</dbReference>
<dbReference type="CDD" id="cd00156">
    <property type="entry name" value="REC"/>
    <property type="match status" value="1"/>
</dbReference>
<dbReference type="Gene3D" id="3.40.50.2300">
    <property type="match status" value="1"/>
</dbReference>
<dbReference type="InterPro" id="IPR050595">
    <property type="entry name" value="Bact_response_regulator"/>
</dbReference>
<dbReference type="InterPro" id="IPR011006">
    <property type="entry name" value="CheY-like_superfamily"/>
</dbReference>
<dbReference type="InterPro" id="IPR001789">
    <property type="entry name" value="Sig_transdc_resp-reg_receiver"/>
</dbReference>
<dbReference type="PANTHER" id="PTHR44591:SF3">
    <property type="entry name" value="RESPONSE REGULATORY DOMAIN-CONTAINING PROTEIN"/>
    <property type="match status" value="1"/>
</dbReference>
<dbReference type="PANTHER" id="PTHR44591">
    <property type="entry name" value="STRESS RESPONSE REGULATOR PROTEIN 1"/>
    <property type="match status" value="1"/>
</dbReference>
<dbReference type="Pfam" id="PF00072">
    <property type="entry name" value="Response_reg"/>
    <property type="match status" value="1"/>
</dbReference>
<dbReference type="SMART" id="SM00448">
    <property type="entry name" value="REC"/>
    <property type="match status" value="1"/>
</dbReference>
<dbReference type="SUPFAM" id="SSF52172">
    <property type="entry name" value="CheY-like"/>
    <property type="match status" value="1"/>
</dbReference>
<dbReference type="PROSITE" id="PS50110">
    <property type="entry name" value="RESPONSE_REGULATORY"/>
    <property type="match status" value="1"/>
</dbReference>